<comment type="function">
    <text evidence="1">RNA chaperone that binds small regulatory RNA (sRNAs) and mRNAs to facilitate mRNA translational regulation in response to envelope stress, environmental stress and changes in metabolite concentrations. Also binds with high specificity to tRNAs.</text>
</comment>
<comment type="subunit">
    <text evidence="1">Homohexamer.</text>
</comment>
<comment type="similarity">
    <text evidence="1">Belongs to the Hfq family.</text>
</comment>
<accession>Q493V9</accession>
<name>HFQ_BLOPB</name>
<proteinExistence type="inferred from homology"/>
<sequence length="81" mass="9421">MHKVQSLQDPFLNVLRRERVPVFIYLINGIKLQGEIESFDKFVILLRNTVNQMIYKHAISTIVPSRVVSYYVGRAGNHTTF</sequence>
<organism>
    <name type="scientific">Blochmanniella pennsylvanica (strain BPEN)</name>
    <dbReference type="NCBI Taxonomy" id="291272"/>
    <lineage>
        <taxon>Bacteria</taxon>
        <taxon>Pseudomonadati</taxon>
        <taxon>Pseudomonadota</taxon>
        <taxon>Gammaproteobacteria</taxon>
        <taxon>Enterobacterales</taxon>
        <taxon>Enterobacteriaceae</taxon>
        <taxon>ant endosymbionts</taxon>
        <taxon>Candidatus Blochmanniella</taxon>
    </lineage>
</organism>
<protein>
    <recommendedName>
        <fullName evidence="1">RNA-binding protein Hfq</fullName>
    </recommendedName>
</protein>
<keyword id="KW-1185">Reference proteome</keyword>
<keyword id="KW-0694">RNA-binding</keyword>
<keyword id="KW-0346">Stress response</keyword>
<gene>
    <name evidence="1" type="primary">hfq</name>
    <name type="ordered locus">BPEN_082</name>
</gene>
<dbReference type="EMBL" id="CP000016">
    <property type="protein sequence ID" value="AAZ40725.1"/>
    <property type="molecule type" value="Genomic_DNA"/>
</dbReference>
<dbReference type="SMR" id="Q493V9"/>
<dbReference type="STRING" id="291272.BPEN_082"/>
<dbReference type="KEGG" id="bpn:BPEN_082"/>
<dbReference type="eggNOG" id="COG1923">
    <property type="taxonomic scope" value="Bacteria"/>
</dbReference>
<dbReference type="HOGENOM" id="CLU_113688_2_2_6"/>
<dbReference type="OrthoDB" id="9799751at2"/>
<dbReference type="Proteomes" id="UP000007794">
    <property type="component" value="Chromosome"/>
</dbReference>
<dbReference type="GO" id="GO:0005829">
    <property type="term" value="C:cytosol"/>
    <property type="evidence" value="ECO:0007669"/>
    <property type="project" value="TreeGrafter"/>
</dbReference>
<dbReference type="GO" id="GO:0003723">
    <property type="term" value="F:RNA binding"/>
    <property type="evidence" value="ECO:0007669"/>
    <property type="project" value="UniProtKB-UniRule"/>
</dbReference>
<dbReference type="GO" id="GO:0006355">
    <property type="term" value="P:regulation of DNA-templated transcription"/>
    <property type="evidence" value="ECO:0007669"/>
    <property type="project" value="InterPro"/>
</dbReference>
<dbReference type="GO" id="GO:0043487">
    <property type="term" value="P:regulation of RNA stability"/>
    <property type="evidence" value="ECO:0007669"/>
    <property type="project" value="TreeGrafter"/>
</dbReference>
<dbReference type="GO" id="GO:0045974">
    <property type="term" value="P:regulation of translation, ncRNA-mediated"/>
    <property type="evidence" value="ECO:0007669"/>
    <property type="project" value="TreeGrafter"/>
</dbReference>
<dbReference type="CDD" id="cd01716">
    <property type="entry name" value="Hfq"/>
    <property type="match status" value="1"/>
</dbReference>
<dbReference type="FunFam" id="2.30.30.100:FF:000001">
    <property type="entry name" value="RNA-binding protein Hfq"/>
    <property type="match status" value="1"/>
</dbReference>
<dbReference type="Gene3D" id="2.30.30.100">
    <property type="match status" value="1"/>
</dbReference>
<dbReference type="HAMAP" id="MF_00436">
    <property type="entry name" value="Hfq"/>
    <property type="match status" value="1"/>
</dbReference>
<dbReference type="InterPro" id="IPR005001">
    <property type="entry name" value="Hfq"/>
</dbReference>
<dbReference type="InterPro" id="IPR010920">
    <property type="entry name" value="LSM_dom_sf"/>
</dbReference>
<dbReference type="InterPro" id="IPR047575">
    <property type="entry name" value="Sm"/>
</dbReference>
<dbReference type="NCBIfam" id="TIGR02383">
    <property type="entry name" value="Hfq"/>
    <property type="match status" value="1"/>
</dbReference>
<dbReference type="NCBIfam" id="NF001602">
    <property type="entry name" value="PRK00395.1"/>
    <property type="match status" value="1"/>
</dbReference>
<dbReference type="PANTHER" id="PTHR34772">
    <property type="entry name" value="RNA-BINDING PROTEIN HFQ"/>
    <property type="match status" value="1"/>
</dbReference>
<dbReference type="PANTHER" id="PTHR34772:SF1">
    <property type="entry name" value="RNA-BINDING PROTEIN HFQ"/>
    <property type="match status" value="1"/>
</dbReference>
<dbReference type="Pfam" id="PF17209">
    <property type="entry name" value="Hfq"/>
    <property type="match status" value="1"/>
</dbReference>
<dbReference type="SUPFAM" id="SSF50182">
    <property type="entry name" value="Sm-like ribonucleoproteins"/>
    <property type="match status" value="1"/>
</dbReference>
<dbReference type="PROSITE" id="PS52002">
    <property type="entry name" value="SM"/>
    <property type="match status" value="1"/>
</dbReference>
<evidence type="ECO:0000255" key="1">
    <source>
        <dbReference type="HAMAP-Rule" id="MF_00436"/>
    </source>
</evidence>
<evidence type="ECO:0000255" key="2">
    <source>
        <dbReference type="PROSITE-ProRule" id="PRU01346"/>
    </source>
</evidence>
<feature type="chain" id="PRO_0000265140" description="RNA-binding protein Hfq">
    <location>
        <begin position="1"/>
        <end position="81"/>
    </location>
</feature>
<feature type="domain" description="Sm" evidence="2">
    <location>
        <begin position="9"/>
        <end position="68"/>
    </location>
</feature>
<reference key="1">
    <citation type="journal article" date="2005" name="Genome Res.">
        <title>Genome sequence of Blochmannia pennsylvanicus indicates parallel evolutionary trends among bacterial mutualists of insects.</title>
        <authorList>
            <person name="Degnan P.H."/>
            <person name="Lazarus A.B."/>
            <person name="Wernegreen J.J."/>
        </authorList>
    </citation>
    <scope>NUCLEOTIDE SEQUENCE [LARGE SCALE GENOMIC DNA]</scope>
    <source>
        <strain>BPEN</strain>
    </source>
</reference>